<keyword id="KW-0025">Alternative splicing</keyword>
<keyword id="KW-1015">Disulfide bond</keyword>
<keyword id="KW-0325">Glycoprotein</keyword>
<keyword id="KW-0472">Membrane</keyword>
<keyword id="KW-0653">Protein transport</keyword>
<keyword id="KW-1185">Reference proteome</keyword>
<keyword id="KW-0677">Repeat</keyword>
<keyword id="KW-0732">Signal</keyword>
<keyword id="KW-0812">Transmembrane</keyword>
<keyword id="KW-1133">Transmembrane helix</keyword>
<keyword id="KW-0813">Transport</keyword>
<feature type="signal peptide" evidence="4">
    <location>
        <begin position="1"/>
        <end position="21"/>
    </location>
</feature>
<feature type="chain" id="PRO_0000286579" description="Apical endosomal glycoprotein">
    <location>
        <begin position="22"/>
        <end position="1228"/>
    </location>
</feature>
<feature type="topological domain" description="Extracellular" evidence="4">
    <location>
        <begin position="23"/>
        <end position="1159"/>
    </location>
</feature>
<feature type="transmembrane region" description="Helical" evidence="4">
    <location>
        <begin position="1160"/>
        <end position="1180"/>
    </location>
</feature>
<feature type="topological domain" description="Cytoplasmic" evidence="4">
    <location>
        <begin position="1181"/>
        <end position="1228"/>
    </location>
</feature>
<feature type="domain" description="LDL-receptor class A 1; truncated" evidence="5">
    <location>
        <begin position="28"/>
        <end position="49"/>
    </location>
</feature>
<feature type="domain" description="MAM 1" evidence="6">
    <location>
        <begin position="65"/>
        <end position="223"/>
    </location>
</feature>
<feature type="domain" description="LDL-receptor class A 2" evidence="5">
    <location>
        <begin position="229"/>
        <end position="267"/>
    </location>
</feature>
<feature type="domain" description="MAM 2" evidence="6">
    <location>
        <begin position="270"/>
        <end position="426"/>
    </location>
</feature>
<feature type="domain" description="LDL-receptor class A 3" evidence="5">
    <location>
        <begin position="457"/>
        <end position="492"/>
    </location>
</feature>
<feature type="domain" description="MAM 3" evidence="6">
    <location>
        <begin position="492"/>
        <end position="649"/>
    </location>
</feature>
<feature type="domain" description="MAM 4" evidence="6">
    <location>
        <begin position="659"/>
        <end position="815"/>
    </location>
</feature>
<feature type="domain" description="MAM 5" evidence="6">
    <location>
        <begin position="817"/>
        <end position="975"/>
    </location>
</feature>
<feature type="domain" description="MAM 6" evidence="6">
    <location>
        <begin position="977"/>
        <end position="1144"/>
    </location>
</feature>
<feature type="glycosylation site" description="N-linked (GlcNAc...) asparagine" evidence="4">
    <location>
        <position position="204"/>
    </location>
</feature>
<feature type="glycosylation site" description="N-linked (GlcNAc...) asparagine" evidence="4">
    <location>
        <position position="290"/>
    </location>
</feature>
<feature type="glycosylation site" description="N-linked (GlcNAc...) asparagine" evidence="4">
    <location>
        <position position="340"/>
    </location>
</feature>
<feature type="glycosylation site" description="N-linked (GlcNAc...) asparagine" evidence="4">
    <location>
        <position position="641"/>
    </location>
</feature>
<feature type="glycosylation site" description="N-linked (GlcNAc...) asparagine" evidence="4">
    <location>
        <position position="841"/>
    </location>
</feature>
<feature type="disulfide bond" evidence="2 5">
    <location>
        <begin position="230"/>
        <end position="242"/>
    </location>
</feature>
<feature type="disulfide bond" evidence="2 5">
    <location>
        <begin position="237"/>
        <end position="255"/>
    </location>
</feature>
<feature type="disulfide bond" evidence="2 5">
    <location>
        <begin position="249"/>
        <end position="266"/>
    </location>
</feature>
<feature type="disulfide bond" evidence="2 5">
    <location>
        <begin position="458"/>
        <end position="469"/>
    </location>
</feature>
<feature type="disulfide bond" evidence="2 5">
    <location>
        <begin position="465"/>
        <end position="482"/>
    </location>
</feature>
<feature type="disulfide bond" evidence="2 5">
    <location>
        <begin position="476"/>
        <end position="491"/>
    </location>
</feature>
<feature type="splice variant" id="VSP_026433" description="In isoform 2." evidence="7">
    <location>
        <begin position="578"/>
        <end position="656"/>
    </location>
</feature>
<comment type="function">
    <text evidence="3">Probably involved in the sorting and selective transport of receptors and ligands across polarized epithelia.</text>
</comment>
<comment type="subcellular location">
    <subcellularLocation>
        <location evidence="1">Membrane</location>
        <topology evidence="1">Single-pass type I membrane protein</topology>
    </subcellularLocation>
</comment>
<comment type="alternative products">
    <event type="alternative splicing"/>
    <isoform>
        <id>A2AJA7-1</id>
        <name>1</name>
        <sequence type="displayed"/>
    </isoform>
    <isoform>
        <id>A2AJA7-2</id>
        <name>2</name>
        <sequence type="described" ref="VSP_026433"/>
    </isoform>
</comment>
<comment type="miscellaneous">
    <molecule>Isoform 1</molecule>
    <text>Gene prediction based on similarity to rat ortholog.</text>
</comment>
<comment type="sequence caution" evidence="7">
    <conflict type="erroneous gene model prediction">
        <sequence resource="EMBL-CDS" id="CAM25169"/>
    </conflict>
</comment>
<sequence>MCLPSHLLSTWVLFMAAQSLGKTWLPNHCRSPIKAVCNFVCDCGDCSDETQCGFHGASTIPSTSFTCNFEQDSCGWQDISTSGYRWLRDRAGAVLHGPGPHSDHTHGTDLGWYMAVGTHSGKEPSTATLRSPVMREAAPTCELRLWYHIASRDVAELRLDLTHGVETLTLWQTSGPWGPGWQELAVNTGRIQGDFKVTFSATRNATHRGAVALDDVEFRDCGLPIPQARCPLGHHHCQNKACVEPHQLCDGEDNCGDRSDEDPLICSHHMATDFETGLGPWNQLEGWTRNHSAGSMVSPAWPHRDHSRNSAYGFFLISVAKPGTTAVLYSPEFQGSVSNNCSFTFYYYLHGSEASHFQLFLQAQGLNTPQVPVLLRSRHGELGTAWVRDRVDIQSAHPFRILLAGETGPGGVVGLDDLIMSSHCMLVPAMSTLQSSLSGPVPLALYPQTSIKLPQQTCEPGHLSCGDLCVPPEQLCDFQKHCAEGEDEHKCGTTDFESASAGGWEDISVGKLQWQWVEAQEKSKPAGDANRDAPGHFLSLQKAWGQLRSEARALTPALGPSGPHCELHMAYYFQSHPQGFLALVVVENGFRELLWQAPGGGSGSWTEEKIILGARRRPFQLEFVSLVDLDGPGQQGAGVDNVTLRDCNPMVTTESDQELSCNFERDSCSWHTGHLTDAHWHRIKSHGSQLDHTTGQGFFMFLDPTDPPARGQGALLLTRPQVPVVPKECLSFWYRLYGPQIGTLCLAMRREREEDILLWSRSGTHGNRWHQAWVTLHHQPEASTKYQLLFEGLRNGYHGTMALDDIAVRPGPCWAPKSCSFEDSDCGFSPGGWGLWTHQSNASGLASWGPWIDHTTGTAQGHYMVVDTSPNVLPKGHVAALTSEEHQPLSQPACLTFWYHMSVPNPGTLRVHVEESTRRQELSISAHGRSAWRLGSVNVQAEQAWKVVFEAVAAGVEYSYMALDDISLQDGPCPQPGSCDFETGLCGWSHLPWPSLGGYSWDWSSGATPSRYPQPSVDHTLGTEAGHFAFFETSVLGPGGQAAWLRSEPLPATTVSCLRFWYYMGFPEHFYKGELRVLLSSARGQLAVWYQGGHLRDQWLQVQIELSNSEEFQIVFEATLGGQPALGPIAIDDVQYLAGQQCKQPSPSQGEVAAPVSVPVAVGGALLFFMFLVLMGLGGWHWLQKQHCPGQRSTDAAASGFANILFNADHVTLPESITSNPQSPPDLA</sequence>
<gene>
    <name evidence="8" type="primary">Mamdc4</name>
    <name type="synonym">Aegp</name>
    <name type="synonym">Gm995</name>
</gene>
<accession>A2AJA7</accession>
<accession>A2AJA6</accession>
<dbReference type="EMBL" id="AL732590">
    <property type="protein sequence ID" value="CAM25169.1"/>
    <property type="status" value="ALT_SEQ"/>
    <property type="molecule type" value="Genomic_DNA"/>
</dbReference>
<dbReference type="EMBL" id="AL732590">
    <property type="protein sequence ID" value="CAM25170.1"/>
    <property type="molecule type" value="Genomic_DNA"/>
</dbReference>
<dbReference type="SMR" id="A2AJA7"/>
<dbReference type="FunCoup" id="A2AJA7">
    <property type="interactions" value="398"/>
</dbReference>
<dbReference type="STRING" id="10090.ENSMUSP00000092735"/>
<dbReference type="GlyCosmos" id="A2AJA7">
    <property type="glycosylation" value="5 sites, No reported glycans"/>
</dbReference>
<dbReference type="GlyGen" id="A2AJA7">
    <property type="glycosylation" value="6 sites"/>
</dbReference>
<dbReference type="PhosphoSitePlus" id="A2AJA7"/>
<dbReference type="PaxDb" id="10090-ENSMUSP00000092735"/>
<dbReference type="Antibodypedia" id="64043">
    <property type="antibodies" value="9 antibodies from 7 providers"/>
</dbReference>
<dbReference type="Ensembl" id="ENSMUST00000114223.8">
    <molecule id="A2AJA7-1"/>
    <property type="protein sequence ID" value="ENSMUSP00000109861.2"/>
    <property type="gene ID" value="ENSMUSG00000026941.17"/>
</dbReference>
<dbReference type="AGR" id="MGI:2685841"/>
<dbReference type="MGI" id="MGI:2685841">
    <property type="gene designation" value="Mamdc4"/>
</dbReference>
<dbReference type="VEuPathDB" id="HostDB:ENSMUSG00000026941"/>
<dbReference type="eggNOG" id="KOG3627">
    <property type="taxonomic scope" value="Eukaryota"/>
</dbReference>
<dbReference type="GeneTree" id="ENSGT00940000162046"/>
<dbReference type="InParanoid" id="A2AJA7"/>
<dbReference type="PRO" id="PR:A2AJA7"/>
<dbReference type="Proteomes" id="UP000000589">
    <property type="component" value="Chromosome 2"/>
</dbReference>
<dbReference type="RNAct" id="A2AJA7">
    <property type="molecule type" value="protein"/>
</dbReference>
<dbReference type="Bgee" id="ENSMUSG00000026941">
    <property type="expression patterns" value="Expressed in epithelium of small intestine and 119 other cell types or tissues"/>
</dbReference>
<dbReference type="ExpressionAtlas" id="A2AJA7">
    <property type="expression patterns" value="baseline and differential"/>
</dbReference>
<dbReference type="GO" id="GO:0016020">
    <property type="term" value="C:membrane"/>
    <property type="evidence" value="ECO:0007669"/>
    <property type="project" value="UniProtKB-SubCell"/>
</dbReference>
<dbReference type="GO" id="GO:1990909">
    <property type="term" value="C:Wnt signalosome"/>
    <property type="evidence" value="ECO:0000314"/>
    <property type="project" value="MGI"/>
</dbReference>
<dbReference type="GO" id="GO:0034504">
    <property type="term" value="P:protein localization to nucleus"/>
    <property type="evidence" value="ECO:0000315"/>
    <property type="project" value="MGI"/>
</dbReference>
<dbReference type="GO" id="GO:0015031">
    <property type="term" value="P:protein transport"/>
    <property type="evidence" value="ECO:0007669"/>
    <property type="project" value="UniProtKB-KW"/>
</dbReference>
<dbReference type="GO" id="GO:0016055">
    <property type="term" value="P:Wnt signaling pathway"/>
    <property type="evidence" value="ECO:0000315"/>
    <property type="project" value="MGI"/>
</dbReference>
<dbReference type="CDD" id="cd00112">
    <property type="entry name" value="LDLa"/>
    <property type="match status" value="3"/>
</dbReference>
<dbReference type="CDD" id="cd06263">
    <property type="entry name" value="MAM"/>
    <property type="match status" value="6"/>
</dbReference>
<dbReference type="FunFam" id="2.60.120.200:FF:000342">
    <property type="entry name" value="Apical endosomal glycoprotein"/>
    <property type="match status" value="1"/>
</dbReference>
<dbReference type="FunFam" id="2.60.120.200:FF:000409">
    <property type="entry name" value="Apical endosomal glycoprotein"/>
    <property type="match status" value="1"/>
</dbReference>
<dbReference type="FunFam" id="4.10.400.10:FF:000012">
    <property type="entry name" value="Low-density lipoprotein receptor-related protein 1"/>
    <property type="match status" value="1"/>
</dbReference>
<dbReference type="Gene3D" id="2.60.120.200">
    <property type="match status" value="6"/>
</dbReference>
<dbReference type="Gene3D" id="4.10.400.10">
    <property type="entry name" value="Low-density Lipoprotein Receptor"/>
    <property type="match status" value="2"/>
</dbReference>
<dbReference type="InterPro" id="IPR013320">
    <property type="entry name" value="ConA-like_dom_sf"/>
</dbReference>
<dbReference type="InterPro" id="IPR036055">
    <property type="entry name" value="LDL_receptor-like_sf"/>
</dbReference>
<dbReference type="InterPro" id="IPR023415">
    <property type="entry name" value="LDLR_class-A_CS"/>
</dbReference>
<dbReference type="InterPro" id="IPR002172">
    <property type="entry name" value="LDrepeatLR_classA_rpt"/>
</dbReference>
<dbReference type="InterPro" id="IPR000998">
    <property type="entry name" value="MAM_dom"/>
</dbReference>
<dbReference type="InterPro" id="IPR051560">
    <property type="entry name" value="MAM_domain-containing"/>
</dbReference>
<dbReference type="PANTHER" id="PTHR23282:SF129">
    <property type="entry name" value="APICAL ENDOSOMAL GLYCOPROTEIN"/>
    <property type="match status" value="1"/>
</dbReference>
<dbReference type="PANTHER" id="PTHR23282">
    <property type="entry name" value="APICAL ENDOSOMAL GLYCOPROTEIN PRECURSOR"/>
    <property type="match status" value="1"/>
</dbReference>
<dbReference type="Pfam" id="PF00057">
    <property type="entry name" value="Ldl_recept_a"/>
    <property type="match status" value="1"/>
</dbReference>
<dbReference type="Pfam" id="PF00629">
    <property type="entry name" value="MAM"/>
    <property type="match status" value="6"/>
</dbReference>
<dbReference type="PRINTS" id="PR00261">
    <property type="entry name" value="LDLRECEPTOR"/>
</dbReference>
<dbReference type="SMART" id="SM00192">
    <property type="entry name" value="LDLa"/>
    <property type="match status" value="3"/>
</dbReference>
<dbReference type="SMART" id="SM00137">
    <property type="entry name" value="MAM"/>
    <property type="match status" value="6"/>
</dbReference>
<dbReference type="SUPFAM" id="SSF49899">
    <property type="entry name" value="Concanavalin A-like lectins/glucanases"/>
    <property type="match status" value="6"/>
</dbReference>
<dbReference type="SUPFAM" id="SSF57424">
    <property type="entry name" value="LDL receptor-like module"/>
    <property type="match status" value="2"/>
</dbReference>
<dbReference type="PROSITE" id="PS01209">
    <property type="entry name" value="LDLRA_1"/>
    <property type="match status" value="2"/>
</dbReference>
<dbReference type="PROSITE" id="PS50068">
    <property type="entry name" value="LDLRA_2"/>
    <property type="match status" value="2"/>
</dbReference>
<dbReference type="PROSITE" id="PS50060">
    <property type="entry name" value="MAM_2"/>
    <property type="match status" value="6"/>
</dbReference>
<protein>
    <recommendedName>
        <fullName>Apical endosomal glycoprotein</fullName>
    </recommendedName>
    <alternativeName>
        <fullName>MAM domain-containing protein 4</fullName>
    </alternativeName>
</protein>
<organism>
    <name type="scientific">Mus musculus</name>
    <name type="common">Mouse</name>
    <dbReference type="NCBI Taxonomy" id="10090"/>
    <lineage>
        <taxon>Eukaryota</taxon>
        <taxon>Metazoa</taxon>
        <taxon>Chordata</taxon>
        <taxon>Craniata</taxon>
        <taxon>Vertebrata</taxon>
        <taxon>Euteleostomi</taxon>
        <taxon>Mammalia</taxon>
        <taxon>Eutheria</taxon>
        <taxon>Euarchontoglires</taxon>
        <taxon>Glires</taxon>
        <taxon>Rodentia</taxon>
        <taxon>Myomorpha</taxon>
        <taxon>Muroidea</taxon>
        <taxon>Muridae</taxon>
        <taxon>Murinae</taxon>
        <taxon>Mus</taxon>
        <taxon>Mus</taxon>
    </lineage>
</organism>
<name>AEGP_MOUSE</name>
<reference key="1">
    <citation type="journal article" date="2009" name="PLoS Biol.">
        <title>Lineage-specific biology revealed by a finished genome assembly of the mouse.</title>
        <authorList>
            <person name="Church D.M."/>
            <person name="Goodstadt L."/>
            <person name="Hillier L.W."/>
            <person name="Zody M.C."/>
            <person name="Goldstein S."/>
            <person name="She X."/>
            <person name="Bult C.J."/>
            <person name="Agarwala R."/>
            <person name="Cherry J.L."/>
            <person name="DiCuccio M."/>
            <person name="Hlavina W."/>
            <person name="Kapustin Y."/>
            <person name="Meric P."/>
            <person name="Maglott D."/>
            <person name="Birtle Z."/>
            <person name="Marques A.C."/>
            <person name="Graves T."/>
            <person name="Zhou S."/>
            <person name="Teague B."/>
            <person name="Potamousis K."/>
            <person name="Churas C."/>
            <person name="Place M."/>
            <person name="Herschleb J."/>
            <person name="Runnheim R."/>
            <person name="Forrest D."/>
            <person name="Amos-Landgraf J."/>
            <person name="Schwartz D.C."/>
            <person name="Cheng Z."/>
            <person name="Lindblad-Toh K."/>
            <person name="Eichler E.E."/>
            <person name="Ponting C.P."/>
        </authorList>
    </citation>
    <scope>NUCLEOTIDE SEQUENCE [LARGE SCALE GENOMIC DNA]</scope>
    <source>
        <strain>C57BL/6J</strain>
    </source>
</reference>
<evidence type="ECO:0000250" key="1"/>
<evidence type="ECO:0000250" key="2">
    <source>
        <dbReference type="UniProtKB" id="P01130"/>
    </source>
</evidence>
<evidence type="ECO:0000250" key="3">
    <source>
        <dbReference type="UniProtKB" id="Q63191"/>
    </source>
</evidence>
<evidence type="ECO:0000255" key="4"/>
<evidence type="ECO:0000255" key="5">
    <source>
        <dbReference type="PROSITE-ProRule" id="PRU00124"/>
    </source>
</evidence>
<evidence type="ECO:0000255" key="6">
    <source>
        <dbReference type="PROSITE-ProRule" id="PRU00128"/>
    </source>
</evidence>
<evidence type="ECO:0000305" key="7"/>
<evidence type="ECO:0000312" key="8">
    <source>
        <dbReference type="MGI" id="MGI:2685841"/>
    </source>
</evidence>
<proteinExistence type="inferred from homology"/>